<comment type="function">
    <text evidence="1">One of the primary rRNA binding proteins, it binds directly to 16S rRNA where it nucleates assembly of the head domain of the 30S subunit. Is located at the subunit interface close to the decoding center, probably blocks exit of the E-site tRNA.</text>
</comment>
<comment type="subunit">
    <text evidence="1">Part of the 30S ribosomal subunit. Contacts proteins S9 and S11.</text>
</comment>
<comment type="similarity">
    <text evidence="1">Belongs to the universal ribosomal protein uS7 family.</text>
</comment>
<feature type="chain" id="PRO_0000124222" description="Small ribosomal subunit protein uS7">
    <location>
        <begin position="1"/>
        <end position="156"/>
    </location>
</feature>
<accession>Q6FZB8</accession>
<dbReference type="EMBL" id="BX897700">
    <property type="protein sequence ID" value="CAF26310.1"/>
    <property type="molecule type" value="Genomic_DNA"/>
</dbReference>
<dbReference type="RefSeq" id="WP_011179555.1">
    <property type="nucleotide sequence ID" value="NC_005955.1"/>
</dbReference>
<dbReference type="SMR" id="Q6FZB8"/>
<dbReference type="GeneID" id="56532817"/>
<dbReference type="KEGG" id="bqu:BQ08270"/>
<dbReference type="eggNOG" id="COG0049">
    <property type="taxonomic scope" value="Bacteria"/>
</dbReference>
<dbReference type="HOGENOM" id="CLU_072226_1_1_5"/>
<dbReference type="OrthoDB" id="9807653at2"/>
<dbReference type="Proteomes" id="UP000000597">
    <property type="component" value="Chromosome"/>
</dbReference>
<dbReference type="GO" id="GO:0015935">
    <property type="term" value="C:small ribosomal subunit"/>
    <property type="evidence" value="ECO:0007669"/>
    <property type="project" value="InterPro"/>
</dbReference>
<dbReference type="GO" id="GO:0019843">
    <property type="term" value="F:rRNA binding"/>
    <property type="evidence" value="ECO:0007669"/>
    <property type="project" value="UniProtKB-UniRule"/>
</dbReference>
<dbReference type="GO" id="GO:0003735">
    <property type="term" value="F:structural constituent of ribosome"/>
    <property type="evidence" value="ECO:0007669"/>
    <property type="project" value="InterPro"/>
</dbReference>
<dbReference type="GO" id="GO:0000049">
    <property type="term" value="F:tRNA binding"/>
    <property type="evidence" value="ECO:0007669"/>
    <property type="project" value="UniProtKB-UniRule"/>
</dbReference>
<dbReference type="GO" id="GO:0006412">
    <property type="term" value="P:translation"/>
    <property type="evidence" value="ECO:0007669"/>
    <property type="project" value="UniProtKB-UniRule"/>
</dbReference>
<dbReference type="CDD" id="cd14869">
    <property type="entry name" value="uS7_Bacteria"/>
    <property type="match status" value="1"/>
</dbReference>
<dbReference type="FunFam" id="1.10.455.10:FF:000001">
    <property type="entry name" value="30S ribosomal protein S7"/>
    <property type="match status" value="1"/>
</dbReference>
<dbReference type="Gene3D" id="1.10.455.10">
    <property type="entry name" value="Ribosomal protein S7 domain"/>
    <property type="match status" value="1"/>
</dbReference>
<dbReference type="HAMAP" id="MF_00480_B">
    <property type="entry name" value="Ribosomal_uS7_B"/>
    <property type="match status" value="1"/>
</dbReference>
<dbReference type="InterPro" id="IPR000235">
    <property type="entry name" value="Ribosomal_uS7"/>
</dbReference>
<dbReference type="InterPro" id="IPR005717">
    <property type="entry name" value="Ribosomal_uS7_bac/org-type"/>
</dbReference>
<dbReference type="InterPro" id="IPR020606">
    <property type="entry name" value="Ribosomal_uS7_CS"/>
</dbReference>
<dbReference type="InterPro" id="IPR023798">
    <property type="entry name" value="Ribosomal_uS7_dom"/>
</dbReference>
<dbReference type="InterPro" id="IPR036823">
    <property type="entry name" value="Ribosomal_uS7_dom_sf"/>
</dbReference>
<dbReference type="NCBIfam" id="TIGR01029">
    <property type="entry name" value="rpsG_bact"/>
    <property type="match status" value="1"/>
</dbReference>
<dbReference type="PANTHER" id="PTHR11205">
    <property type="entry name" value="RIBOSOMAL PROTEIN S7"/>
    <property type="match status" value="1"/>
</dbReference>
<dbReference type="Pfam" id="PF00177">
    <property type="entry name" value="Ribosomal_S7"/>
    <property type="match status" value="1"/>
</dbReference>
<dbReference type="PIRSF" id="PIRSF002122">
    <property type="entry name" value="RPS7p_RPS7a_RPS5e_RPS7o"/>
    <property type="match status" value="1"/>
</dbReference>
<dbReference type="SUPFAM" id="SSF47973">
    <property type="entry name" value="Ribosomal protein S7"/>
    <property type="match status" value="1"/>
</dbReference>
<dbReference type="PROSITE" id="PS00052">
    <property type="entry name" value="RIBOSOMAL_S7"/>
    <property type="match status" value="1"/>
</dbReference>
<organism>
    <name type="scientific">Bartonella quintana (strain Toulouse)</name>
    <name type="common">Rochalimaea quintana</name>
    <dbReference type="NCBI Taxonomy" id="283165"/>
    <lineage>
        <taxon>Bacteria</taxon>
        <taxon>Pseudomonadati</taxon>
        <taxon>Pseudomonadota</taxon>
        <taxon>Alphaproteobacteria</taxon>
        <taxon>Hyphomicrobiales</taxon>
        <taxon>Bartonellaceae</taxon>
        <taxon>Bartonella</taxon>
    </lineage>
</organism>
<proteinExistence type="inferred from homology"/>
<keyword id="KW-0687">Ribonucleoprotein</keyword>
<keyword id="KW-0689">Ribosomal protein</keyword>
<keyword id="KW-0694">RNA-binding</keyword>
<keyword id="KW-0699">rRNA-binding</keyword>
<keyword id="KW-0820">tRNA-binding</keyword>
<evidence type="ECO:0000255" key="1">
    <source>
        <dbReference type="HAMAP-Rule" id="MF_00480"/>
    </source>
</evidence>
<evidence type="ECO:0000305" key="2"/>
<protein>
    <recommendedName>
        <fullName evidence="1">Small ribosomal subunit protein uS7</fullName>
    </recommendedName>
    <alternativeName>
        <fullName evidence="2">30S ribosomal protein S7</fullName>
    </alternativeName>
</protein>
<gene>
    <name evidence="1" type="primary">rpsG</name>
    <name type="ordered locus">BQ08270</name>
</gene>
<name>RS7_BARQU</name>
<reference key="1">
    <citation type="journal article" date="2004" name="Proc. Natl. Acad. Sci. U.S.A.">
        <title>The louse-borne human pathogen Bartonella quintana is a genomic derivative of the zoonotic agent Bartonella henselae.</title>
        <authorList>
            <person name="Alsmark U.C.M."/>
            <person name="Frank A.C."/>
            <person name="Karlberg E.O."/>
            <person name="Legault B.-A."/>
            <person name="Ardell D.H."/>
            <person name="Canbaeck B."/>
            <person name="Eriksson A.-S."/>
            <person name="Naeslund A.K."/>
            <person name="Handley S.A."/>
            <person name="Huvet M."/>
            <person name="La Scola B."/>
            <person name="Holmberg M."/>
            <person name="Andersson S.G.E."/>
        </authorList>
    </citation>
    <scope>NUCLEOTIDE SEQUENCE [LARGE SCALE GENOMIC DNA]</scope>
    <source>
        <strain>Toulouse</strain>
    </source>
</reference>
<sequence>MSRRHRAEKREINPDPKFGDLVITKFMNAIMFDGKKSVAERIVYGALDVVESKVKSDPVVLFHQALENVAPHIEVRSRRVGGATYQVPVDVRPDRRRALAVRWLITAARGRNETTMINRLAGELMDAANNRGSAVKKREDVHRMAEANRAFSHYRW</sequence>